<evidence type="ECO:0000255" key="1">
    <source>
        <dbReference type="HAMAP-Rule" id="MF_00031"/>
    </source>
</evidence>
<proteinExistence type="inferred from homology"/>
<keyword id="KW-0963">Cytoplasm</keyword>
<keyword id="KW-0227">DNA damage</keyword>
<keyword id="KW-0233">DNA recombination</keyword>
<keyword id="KW-0234">DNA repair</keyword>
<keyword id="KW-0238">DNA-binding</keyword>
<organism>
    <name type="scientific">Thermobifida fusca (strain YX)</name>
    <dbReference type="NCBI Taxonomy" id="269800"/>
    <lineage>
        <taxon>Bacteria</taxon>
        <taxon>Bacillati</taxon>
        <taxon>Actinomycetota</taxon>
        <taxon>Actinomycetes</taxon>
        <taxon>Streptosporangiales</taxon>
        <taxon>Nocardiopsidaceae</taxon>
        <taxon>Thermobifida</taxon>
    </lineage>
</organism>
<reference key="1">
    <citation type="journal article" date="2007" name="J. Bacteriol.">
        <title>Genome sequence and analysis of the soil cellulolytic actinomycete Thermobifida fusca YX.</title>
        <authorList>
            <person name="Lykidis A."/>
            <person name="Mavromatis K."/>
            <person name="Ivanova N."/>
            <person name="Anderson I."/>
            <person name="Land M."/>
            <person name="DiBartolo G."/>
            <person name="Martinez M."/>
            <person name="Lapidus A."/>
            <person name="Lucas S."/>
            <person name="Copeland A."/>
            <person name="Richardson P."/>
            <person name="Wilson D.B."/>
            <person name="Kyrpides N."/>
        </authorList>
    </citation>
    <scope>NUCLEOTIDE SEQUENCE [LARGE SCALE GENOMIC DNA]</scope>
    <source>
        <strain>YX</strain>
    </source>
</reference>
<feature type="chain" id="PRO_0000224918" description="Holliday junction branch migration complex subunit RuvA">
    <location>
        <begin position="1"/>
        <end position="202"/>
    </location>
</feature>
<feature type="region of interest" description="Domain I" evidence="1">
    <location>
        <begin position="1"/>
        <end position="63"/>
    </location>
</feature>
<feature type="region of interest" description="Domain II" evidence="1">
    <location>
        <begin position="64"/>
        <end position="142"/>
    </location>
</feature>
<feature type="region of interest" description="Flexible linker" evidence="1">
    <location>
        <begin position="143"/>
        <end position="152"/>
    </location>
</feature>
<feature type="region of interest" description="Domain III" evidence="1">
    <location>
        <begin position="152"/>
        <end position="202"/>
    </location>
</feature>
<accession>Q47N42</accession>
<dbReference type="EMBL" id="CP000088">
    <property type="protein sequence ID" value="AAZ56127.1"/>
    <property type="molecule type" value="Genomic_DNA"/>
</dbReference>
<dbReference type="RefSeq" id="WP_011292517.1">
    <property type="nucleotide sequence ID" value="NC_007333.1"/>
</dbReference>
<dbReference type="SMR" id="Q47N42"/>
<dbReference type="STRING" id="269800.Tfu_2094"/>
<dbReference type="KEGG" id="tfu:Tfu_2094"/>
<dbReference type="eggNOG" id="COG0632">
    <property type="taxonomic scope" value="Bacteria"/>
</dbReference>
<dbReference type="HOGENOM" id="CLU_087936_2_1_11"/>
<dbReference type="OrthoDB" id="5293449at2"/>
<dbReference type="GO" id="GO:0005737">
    <property type="term" value="C:cytoplasm"/>
    <property type="evidence" value="ECO:0007669"/>
    <property type="project" value="UniProtKB-SubCell"/>
</dbReference>
<dbReference type="GO" id="GO:0009379">
    <property type="term" value="C:Holliday junction helicase complex"/>
    <property type="evidence" value="ECO:0007669"/>
    <property type="project" value="InterPro"/>
</dbReference>
<dbReference type="GO" id="GO:0048476">
    <property type="term" value="C:Holliday junction resolvase complex"/>
    <property type="evidence" value="ECO:0007669"/>
    <property type="project" value="UniProtKB-UniRule"/>
</dbReference>
<dbReference type="GO" id="GO:0005524">
    <property type="term" value="F:ATP binding"/>
    <property type="evidence" value="ECO:0007669"/>
    <property type="project" value="InterPro"/>
</dbReference>
<dbReference type="GO" id="GO:0000400">
    <property type="term" value="F:four-way junction DNA binding"/>
    <property type="evidence" value="ECO:0007669"/>
    <property type="project" value="UniProtKB-UniRule"/>
</dbReference>
<dbReference type="GO" id="GO:0009378">
    <property type="term" value="F:four-way junction helicase activity"/>
    <property type="evidence" value="ECO:0007669"/>
    <property type="project" value="InterPro"/>
</dbReference>
<dbReference type="GO" id="GO:0006310">
    <property type="term" value="P:DNA recombination"/>
    <property type="evidence" value="ECO:0007669"/>
    <property type="project" value="UniProtKB-UniRule"/>
</dbReference>
<dbReference type="GO" id="GO:0006281">
    <property type="term" value="P:DNA repair"/>
    <property type="evidence" value="ECO:0007669"/>
    <property type="project" value="UniProtKB-UniRule"/>
</dbReference>
<dbReference type="Gene3D" id="1.10.150.20">
    <property type="entry name" value="5' to 3' exonuclease, C-terminal subdomain"/>
    <property type="match status" value="1"/>
</dbReference>
<dbReference type="Gene3D" id="1.10.8.10">
    <property type="entry name" value="DNA helicase RuvA subunit, C-terminal domain"/>
    <property type="match status" value="1"/>
</dbReference>
<dbReference type="Gene3D" id="2.40.50.140">
    <property type="entry name" value="Nucleic acid-binding proteins"/>
    <property type="match status" value="1"/>
</dbReference>
<dbReference type="HAMAP" id="MF_00031">
    <property type="entry name" value="DNA_HJ_migration_RuvA"/>
    <property type="match status" value="1"/>
</dbReference>
<dbReference type="InterPro" id="IPR013849">
    <property type="entry name" value="DNA_helicase_Holl-junc_RuvA_I"/>
</dbReference>
<dbReference type="InterPro" id="IPR003583">
    <property type="entry name" value="Hlx-hairpin-Hlx_DNA-bd_motif"/>
</dbReference>
<dbReference type="InterPro" id="IPR012340">
    <property type="entry name" value="NA-bd_OB-fold"/>
</dbReference>
<dbReference type="InterPro" id="IPR000085">
    <property type="entry name" value="RuvA"/>
</dbReference>
<dbReference type="InterPro" id="IPR010994">
    <property type="entry name" value="RuvA_2-like"/>
</dbReference>
<dbReference type="InterPro" id="IPR011114">
    <property type="entry name" value="RuvA_C"/>
</dbReference>
<dbReference type="InterPro" id="IPR036267">
    <property type="entry name" value="RuvA_C_sf"/>
</dbReference>
<dbReference type="NCBIfam" id="TIGR00084">
    <property type="entry name" value="ruvA"/>
    <property type="match status" value="1"/>
</dbReference>
<dbReference type="Pfam" id="PF14520">
    <property type="entry name" value="HHH_5"/>
    <property type="match status" value="1"/>
</dbReference>
<dbReference type="Pfam" id="PF07499">
    <property type="entry name" value="RuvA_C"/>
    <property type="match status" value="1"/>
</dbReference>
<dbReference type="Pfam" id="PF01330">
    <property type="entry name" value="RuvA_N"/>
    <property type="match status" value="1"/>
</dbReference>
<dbReference type="SMART" id="SM00278">
    <property type="entry name" value="HhH1"/>
    <property type="match status" value="2"/>
</dbReference>
<dbReference type="SUPFAM" id="SSF46929">
    <property type="entry name" value="DNA helicase RuvA subunit, C-terminal domain"/>
    <property type="match status" value="1"/>
</dbReference>
<dbReference type="SUPFAM" id="SSF50249">
    <property type="entry name" value="Nucleic acid-binding proteins"/>
    <property type="match status" value="1"/>
</dbReference>
<dbReference type="SUPFAM" id="SSF47781">
    <property type="entry name" value="RuvA domain 2-like"/>
    <property type="match status" value="1"/>
</dbReference>
<gene>
    <name evidence="1" type="primary">ruvA</name>
    <name type="ordered locus">Tfu_2094</name>
</gene>
<protein>
    <recommendedName>
        <fullName evidence="1">Holliday junction branch migration complex subunit RuvA</fullName>
    </recommendedName>
</protein>
<comment type="function">
    <text evidence="1">The RuvA-RuvB-RuvC complex processes Holliday junction (HJ) DNA during genetic recombination and DNA repair, while the RuvA-RuvB complex plays an important role in the rescue of blocked DNA replication forks via replication fork reversal (RFR). RuvA specifically binds to HJ cruciform DNA, conferring on it an open structure. The RuvB hexamer acts as an ATP-dependent pump, pulling dsDNA into and through the RuvAB complex. HJ branch migration allows RuvC to scan DNA until it finds its consensus sequence, where it cleaves and resolves the cruciform DNA.</text>
</comment>
<comment type="subunit">
    <text evidence="1">Homotetramer. Forms an RuvA(8)-RuvB(12)-Holliday junction (HJ) complex. HJ DNA is sandwiched between 2 RuvA tetramers; dsDNA enters through RuvA and exits via RuvB. An RuvB hexamer assembles on each DNA strand where it exits the tetramer. Each RuvB hexamer is contacted by two RuvA subunits (via domain III) on 2 adjacent RuvB subunits; this complex drives branch migration. In the full resolvosome a probable DNA-RuvA(4)-RuvB(12)-RuvC(2) complex forms which resolves the HJ.</text>
</comment>
<comment type="subcellular location">
    <subcellularLocation>
        <location evidence="1">Cytoplasm</location>
    </subcellularLocation>
</comment>
<comment type="domain">
    <text evidence="1">Has three domains with a flexible linker between the domains II and III and assumes an 'L' shape. Domain III is highly mobile and contacts RuvB.</text>
</comment>
<comment type="similarity">
    <text evidence="1">Belongs to the RuvA family.</text>
</comment>
<name>RUVA_THEFY</name>
<sequence>MIAFLSGRVVSRGAETAVIDVGGVGMTVHCTPAALARLRVGEEATVATALVVREDSLTLFGFADDDERDTFERLQTASGVGPRLALAMLSVHTPDALRRAIATEDTAALTRVPGIGKKGAQRIVLELKGKLGEPGGDTAATPEQSAAAAPRNWRAQVVSGLVNLGWSTREAEAAADAVAAEAGEQPDVAALLRSALRRLSRA</sequence>